<evidence type="ECO:0000250" key="1">
    <source>
        <dbReference type="UniProtKB" id="Q99VE8"/>
    </source>
</evidence>
<evidence type="ECO:0000305" key="2"/>
<name>NAGD_STAAS</name>
<gene>
    <name type="primary">nagD</name>
    <name type="ordered locus">SAS0799</name>
</gene>
<feature type="chain" id="PRO_0000271484" description="Acid sugar phosphatase">
    <location>
        <begin position="1"/>
        <end position="259"/>
    </location>
</feature>
<dbReference type="EC" id="3.1.3.-" evidence="1"/>
<dbReference type="EMBL" id="BX571857">
    <property type="protein sequence ID" value="CAG42574.1"/>
    <property type="molecule type" value="Genomic_DNA"/>
</dbReference>
<dbReference type="RefSeq" id="WP_000816184.1">
    <property type="nucleotide sequence ID" value="NC_002953.3"/>
</dbReference>
<dbReference type="SMR" id="Q6GAZ7"/>
<dbReference type="KEGG" id="sas:SAS0799"/>
<dbReference type="HOGENOM" id="CLU_043473_1_1_9"/>
<dbReference type="GO" id="GO:0005737">
    <property type="term" value="C:cytoplasm"/>
    <property type="evidence" value="ECO:0007669"/>
    <property type="project" value="TreeGrafter"/>
</dbReference>
<dbReference type="GO" id="GO:0046872">
    <property type="term" value="F:metal ion binding"/>
    <property type="evidence" value="ECO:0007669"/>
    <property type="project" value="UniProtKB-KW"/>
</dbReference>
<dbReference type="GO" id="GO:0016791">
    <property type="term" value="F:phosphatase activity"/>
    <property type="evidence" value="ECO:0007669"/>
    <property type="project" value="TreeGrafter"/>
</dbReference>
<dbReference type="CDD" id="cd07530">
    <property type="entry name" value="HAD_Pase_UmpH-like"/>
    <property type="match status" value="1"/>
</dbReference>
<dbReference type="FunFam" id="3.40.50.1000:FF:000053">
    <property type="entry name" value="TIGR01457 family HAD hydrolase"/>
    <property type="match status" value="1"/>
</dbReference>
<dbReference type="Gene3D" id="3.40.50.1000">
    <property type="entry name" value="HAD superfamily/HAD-like"/>
    <property type="match status" value="2"/>
</dbReference>
<dbReference type="InterPro" id="IPR036412">
    <property type="entry name" value="HAD-like_sf"/>
</dbReference>
<dbReference type="InterPro" id="IPR006357">
    <property type="entry name" value="HAD-SF_hydro_IIA"/>
</dbReference>
<dbReference type="InterPro" id="IPR006354">
    <property type="entry name" value="HAD-SF_hydro_IIA_hyp1"/>
</dbReference>
<dbReference type="InterPro" id="IPR023214">
    <property type="entry name" value="HAD_sf"/>
</dbReference>
<dbReference type="NCBIfam" id="TIGR01460">
    <property type="entry name" value="HAD-SF-IIA"/>
    <property type="match status" value="1"/>
</dbReference>
<dbReference type="NCBIfam" id="TIGR01457">
    <property type="entry name" value="HAD-SF-IIA-hyp2"/>
    <property type="match status" value="1"/>
</dbReference>
<dbReference type="PANTHER" id="PTHR19288">
    <property type="entry name" value="4-NITROPHENYLPHOSPHATASE-RELATED"/>
    <property type="match status" value="1"/>
</dbReference>
<dbReference type="PANTHER" id="PTHR19288:SF46">
    <property type="entry name" value="HALOACID DEHALOGENASE-LIKE HYDROLASE DOMAIN-CONTAINING PROTEIN 2"/>
    <property type="match status" value="1"/>
</dbReference>
<dbReference type="Pfam" id="PF13344">
    <property type="entry name" value="Hydrolase_6"/>
    <property type="match status" value="1"/>
</dbReference>
<dbReference type="Pfam" id="PF13242">
    <property type="entry name" value="Hydrolase_like"/>
    <property type="match status" value="1"/>
</dbReference>
<dbReference type="PIRSF" id="PIRSF000915">
    <property type="entry name" value="PGP-type_phosphatase"/>
    <property type="match status" value="1"/>
</dbReference>
<dbReference type="SFLD" id="SFLDG01139">
    <property type="entry name" value="C2.A:_Pyridoxal_Phosphate_Phos"/>
    <property type="match status" value="1"/>
</dbReference>
<dbReference type="SFLD" id="SFLDS00003">
    <property type="entry name" value="Haloacid_Dehalogenase"/>
    <property type="match status" value="1"/>
</dbReference>
<dbReference type="SUPFAM" id="SSF56784">
    <property type="entry name" value="HAD-like"/>
    <property type="match status" value="1"/>
</dbReference>
<comment type="function">
    <text evidence="1">Catalyzes the dephosphorylation of 2-6 carbon acid sugars in vitro.</text>
</comment>
<comment type="cofactor">
    <cofactor evidence="1">
        <name>Mg(2+)</name>
        <dbReference type="ChEBI" id="CHEBI:18420"/>
    </cofactor>
</comment>
<comment type="similarity">
    <text evidence="2">Belongs to the HAD-like hydrolase superfamily. NagD family.</text>
</comment>
<accession>Q6GAZ7</accession>
<reference key="1">
    <citation type="journal article" date="2004" name="Proc. Natl. Acad. Sci. U.S.A.">
        <title>Complete genomes of two clinical Staphylococcus aureus strains: evidence for the rapid evolution of virulence and drug resistance.</title>
        <authorList>
            <person name="Holden M.T.G."/>
            <person name="Feil E.J."/>
            <person name="Lindsay J.A."/>
            <person name="Peacock S.J."/>
            <person name="Day N.P.J."/>
            <person name="Enright M.C."/>
            <person name="Foster T.J."/>
            <person name="Moore C.E."/>
            <person name="Hurst L."/>
            <person name="Atkin R."/>
            <person name="Barron A."/>
            <person name="Bason N."/>
            <person name="Bentley S.D."/>
            <person name="Chillingworth C."/>
            <person name="Chillingworth T."/>
            <person name="Churcher C."/>
            <person name="Clark L."/>
            <person name="Corton C."/>
            <person name="Cronin A."/>
            <person name="Doggett J."/>
            <person name="Dowd L."/>
            <person name="Feltwell T."/>
            <person name="Hance Z."/>
            <person name="Harris B."/>
            <person name="Hauser H."/>
            <person name="Holroyd S."/>
            <person name="Jagels K."/>
            <person name="James K.D."/>
            <person name="Lennard N."/>
            <person name="Line A."/>
            <person name="Mayes R."/>
            <person name="Moule S."/>
            <person name="Mungall K."/>
            <person name="Ormond D."/>
            <person name="Quail M.A."/>
            <person name="Rabbinowitsch E."/>
            <person name="Rutherford K.M."/>
            <person name="Sanders M."/>
            <person name="Sharp S."/>
            <person name="Simmonds M."/>
            <person name="Stevens K."/>
            <person name="Whitehead S."/>
            <person name="Barrell B.G."/>
            <person name="Spratt B.G."/>
            <person name="Parkhill J."/>
        </authorList>
    </citation>
    <scope>NUCLEOTIDE SEQUENCE [LARGE SCALE GENOMIC DNA]</scope>
    <source>
        <strain>MSSA476</strain>
    </source>
</reference>
<keyword id="KW-0378">Hydrolase</keyword>
<keyword id="KW-0460">Magnesium</keyword>
<keyword id="KW-0479">Metal-binding</keyword>
<sequence length="259" mass="27946">MKQYKAYLIDLDGTMYMGTDEIDGAKQFIDYLNVKGIPHLYVTNNSTKTPEQVTEKLREMHIDAKPEEVVTSALATADYISEQSPGASVYMLGGSGLNTALTEAGLVIKNDEHVDYVVIGLDEQVTYEKLAIATLGVRNGATFISTNPDVSIPKERGLLPGNGAITSVVSVSTGVSPQFIGKPEPIIMVKALEILGLDKSEVAMVGDLYDTDIMSGINVGMDTIHVQTGVSTLEDVQNKNVPPTYSFKDLNEAIAELEK</sequence>
<protein>
    <recommendedName>
        <fullName evidence="1">Acid sugar phosphatase</fullName>
        <ecNumber evidence="1">3.1.3.-</ecNumber>
    </recommendedName>
</protein>
<proteinExistence type="inferred from homology"/>
<organism>
    <name type="scientific">Staphylococcus aureus (strain MSSA476)</name>
    <dbReference type="NCBI Taxonomy" id="282459"/>
    <lineage>
        <taxon>Bacteria</taxon>
        <taxon>Bacillati</taxon>
        <taxon>Bacillota</taxon>
        <taxon>Bacilli</taxon>
        <taxon>Bacillales</taxon>
        <taxon>Staphylococcaceae</taxon>
        <taxon>Staphylococcus</taxon>
    </lineage>
</organism>